<comment type="function">
    <text evidence="1">Plays a role in the inhibition of host innate immunity by inducing the degradation of key host factors required to activate interferon production such as IRF3, IRF5 or IRF7. Associates with components of cullin RING ligases (CRLs) including CUL1 or CUL3, which are essential multisubunit ubiquitination complexes, to modulate their activities.</text>
</comment>
<comment type="subunit">
    <text evidence="1">Interacts (via C-terminus) with host IRF3; this interaction leads to IRF3 degradation. Interacts with host IRF7; this interaction leads to IRF7 degradation. Interacts with host CUL1 and CUL3.</text>
</comment>
<comment type="subcellular location">
    <subcellularLocation>
        <location evidence="1">Host cytoplasm</location>
        <location evidence="1">Host cytoskeleton</location>
    </subcellularLocation>
</comment>
<comment type="domain">
    <text evidence="1">The integrity of the zinc-binding domain in NSP1 is important for degradation of host IRF3.</text>
</comment>
<comment type="domain">
    <text evidence="1">The pLxIS motif targets host IRF3 for degradation; however phosphorylation of NSP1 pLxIS motif is not required for its activity.</text>
</comment>
<comment type="similarity">
    <text evidence="1">Belongs to the rotavirus NSP1 family.</text>
</comment>
<proteinExistence type="inferred from homology"/>
<feature type="chain" id="PRO_0000369077" description="Non-structural protein 1">
    <location>
        <begin position="1"/>
        <end position="492"/>
    </location>
</feature>
<feature type="region of interest" description="RNA-binding" evidence="1">
    <location>
        <begin position="1"/>
        <end position="81"/>
    </location>
</feature>
<feature type="region of interest" description="Zinc-binding domain" evidence="1">
    <location>
        <begin position="42"/>
        <end position="79"/>
    </location>
</feature>
<feature type="region of interest" description="Important for cytoskeleton localization" evidence="1">
    <location>
        <begin position="82"/>
        <end position="176"/>
    </location>
</feature>
<feature type="region of interest" description="Interaction with host IRF3" evidence="1">
    <location>
        <begin position="318"/>
        <end position="492"/>
    </location>
</feature>
<feature type="short sequence motif" description="pLxIS motif" evidence="1">
    <location>
        <begin position="483"/>
        <end position="486"/>
    </location>
</feature>
<reference key="1">
    <citation type="journal article" date="2007" name="Virology">
        <title>Genome heterogeneity of SA11 rotavirus due to reassortment with 'O' agent.</title>
        <authorList>
            <person name="Small C."/>
            <person name="Barro M."/>
            <person name="Brown T.L."/>
            <person name="Patton J.T."/>
        </authorList>
    </citation>
    <scope>NUCLEOTIDE SEQUENCE [GENOMIC RNA]</scope>
</reference>
<organism>
    <name type="scientific">Rotavirus A (isolate RVA/Monkey/United States/TUCH/2003/G3P[24])</name>
    <name type="common">RV-A</name>
    <dbReference type="NCBI Taxonomy" id="444186"/>
    <lineage>
        <taxon>Viruses</taxon>
        <taxon>Riboviria</taxon>
        <taxon>Orthornavirae</taxon>
        <taxon>Duplornaviricota</taxon>
        <taxon>Resentoviricetes</taxon>
        <taxon>Reovirales</taxon>
        <taxon>Sedoreoviridae</taxon>
        <taxon>Rotavirus</taxon>
        <taxon>Rotavirus A</taxon>
    </lineage>
</organism>
<accession>A2T3T1</accession>
<evidence type="ECO:0000255" key="1">
    <source>
        <dbReference type="HAMAP-Rule" id="MF_04088"/>
    </source>
</evidence>
<name>NSP1_ROTTU</name>
<sequence>MATFKDACFHYRRITKLNRELLRIGANSVWTPVSSNKIRGWCIECCQLTELTFCHGCSLAHVCQWCIQNKRCFLDNEPHLLKLRTFESPITKEKLQCIIDLYNLLFPISPGIINRFKKAVKQRKCRNESDKSWYNQLLLPITLNAAVFKFHSREIYIFGFYEGSSACIDLPYRLVNCIDLYDKLLLDQINFERMSCLPDKLQSIYANNYFKLSRLPSMKLKQVYYSDFSKQNLINKYKTKSRIVLRNLTEFTWDSQIDLHHDLINNKDKILAALSTSSLKQFETHDLNLGRVKADIFELGHHCKPNYISSNHWQPASKIFQCKWCNVKYAFRDMDWKMESMYNELLSFLQSCYKSNVNVGHCSSIESVYPLVKDMLWHSITKYIDQTIEKLFDAMNPVQVNEQLVINFYWQIDIALYTHIKMILKTEALPFTFTLNQFNSIIKGIINQWCDVAELDLLPLCTEQTDKLVKLKEEGKLSEEYELLISDSEDDD</sequence>
<dbReference type="EMBL" id="DQ838651">
    <property type="protein sequence ID" value="ABG75830.1"/>
    <property type="molecule type" value="Genomic_RNA"/>
</dbReference>
<dbReference type="Proteomes" id="UP000145116">
    <property type="component" value="Genome"/>
</dbReference>
<dbReference type="GO" id="GO:0030430">
    <property type="term" value="C:host cell cytoplasm"/>
    <property type="evidence" value="ECO:0007669"/>
    <property type="project" value="UniProtKB-UniRule"/>
</dbReference>
<dbReference type="GO" id="GO:0044163">
    <property type="term" value="C:host cytoskeleton"/>
    <property type="evidence" value="ECO:0007669"/>
    <property type="project" value="UniProtKB-SubCell"/>
</dbReference>
<dbReference type="GO" id="GO:0046872">
    <property type="term" value="F:metal ion binding"/>
    <property type="evidence" value="ECO:0007669"/>
    <property type="project" value="UniProtKB-UniRule"/>
</dbReference>
<dbReference type="GO" id="GO:0003723">
    <property type="term" value="F:RNA binding"/>
    <property type="evidence" value="ECO:0007669"/>
    <property type="project" value="UniProtKB-UniRule"/>
</dbReference>
<dbReference type="GO" id="GO:0039548">
    <property type="term" value="P:symbiont-mediated suppression of host cytoplasmic pattern recognition receptor signaling pathway via inhibition of IRF3 activity"/>
    <property type="evidence" value="ECO:0007669"/>
    <property type="project" value="UniProtKB-UniRule"/>
</dbReference>
<dbReference type="GO" id="GO:0039557">
    <property type="term" value="P:symbiont-mediated suppression of host cytoplasmic pattern recognition receptor signaling pathway via inhibition of IRF7 activity"/>
    <property type="evidence" value="ECO:0007669"/>
    <property type="project" value="UniProtKB-UniRule"/>
</dbReference>
<dbReference type="HAMAP" id="MF_04088">
    <property type="entry name" value="ROTA_NSP1"/>
    <property type="match status" value="1"/>
</dbReference>
<dbReference type="InterPro" id="IPR002148">
    <property type="entry name" value="Rotavirus_NSP1"/>
</dbReference>
<dbReference type="Pfam" id="PF00981">
    <property type="entry name" value="Rota_NS53"/>
    <property type="match status" value="1"/>
</dbReference>
<protein>
    <recommendedName>
        <fullName evidence="1">Non-structural protein 1</fullName>
        <shortName evidence="1">NSP1</shortName>
    </recommendedName>
    <alternativeName>
        <fullName evidence="1">NCVP2</fullName>
    </alternativeName>
    <alternativeName>
        <fullName evidence="1">Non-structural RNA-binding protein 53</fullName>
        <shortName evidence="1">NS53</shortName>
    </alternativeName>
</protein>
<organismHost>
    <name type="scientific">Macaca mulatta</name>
    <name type="common">Rhesus macaque</name>
    <dbReference type="NCBI Taxonomy" id="9544"/>
</organismHost>
<keyword id="KW-1035">Host cytoplasm</keyword>
<keyword id="KW-1037">Host cytoskeleton</keyword>
<keyword id="KW-0945">Host-virus interaction</keyword>
<keyword id="KW-1090">Inhibition of host innate immune response by virus</keyword>
<keyword id="KW-1092">Inhibition of host IRF3 by virus</keyword>
<keyword id="KW-1093">Inhibition of host IRF7 by virus</keyword>
<keyword id="KW-1113">Inhibition of host RLR pathway by virus</keyword>
<keyword id="KW-0922">Interferon antiviral system evasion</keyword>
<keyword id="KW-0479">Metal-binding</keyword>
<keyword id="KW-0694">RNA-binding</keyword>
<keyword id="KW-0899">Viral immunoevasion</keyword>